<sequence length="245" mass="27463">MDGWQRAFVLHSRPWSETSLMLDVFTEESGRVRLVAKGARSKRSNLKGALQPFTPLLVRFGGRGEVKTLRSAEAVSLALPLSGITLYSGLYVNELISRVLEHETRFSELFFDYLHCIQALAGTSGSPEPALRRFELALLGHLGYGVDFLHCAGSGEPVDDTMTYRYREEKGFIASLVIDNNTFTGHHLKALASREFPDVDTLRAAKRFTRIALKPYLGGKPLKSRELFRQFMPARKARADNTNND</sequence>
<proteinExistence type="inferred from homology"/>
<gene>
    <name evidence="1" type="primary">recO</name>
    <name type="ordered locus">KPK_1232</name>
</gene>
<name>RECO_KLEP3</name>
<comment type="function">
    <text evidence="1">Involved in DNA repair and RecF pathway recombination.</text>
</comment>
<comment type="similarity">
    <text evidence="1">Belongs to the RecO family.</text>
</comment>
<organism>
    <name type="scientific">Klebsiella pneumoniae (strain 342)</name>
    <dbReference type="NCBI Taxonomy" id="507522"/>
    <lineage>
        <taxon>Bacteria</taxon>
        <taxon>Pseudomonadati</taxon>
        <taxon>Pseudomonadota</taxon>
        <taxon>Gammaproteobacteria</taxon>
        <taxon>Enterobacterales</taxon>
        <taxon>Enterobacteriaceae</taxon>
        <taxon>Klebsiella/Raoultella group</taxon>
        <taxon>Klebsiella</taxon>
        <taxon>Klebsiella pneumoniae complex</taxon>
    </lineage>
</organism>
<evidence type="ECO:0000255" key="1">
    <source>
        <dbReference type="HAMAP-Rule" id="MF_00201"/>
    </source>
</evidence>
<dbReference type="EMBL" id="CP000964">
    <property type="protein sequence ID" value="ACI06855.1"/>
    <property type="molecule type" value="Genomic_DNA"/>
</dbReference>
<dbReference type="SMR" id="B5XNH2"/>
<dbReference type="KEGG" id="kpe:KPK_1232"/>
<dbReference type="HOGENOM" id="CLU_066645_1_0_6"/>
<dbReference type="Proteomes" id="UP000001734">
    <property type="component" value="Chromosome"/>
</dbReference>
<dbReference type="GO" id="GO:0043590">
    <property type="term" value="C:bacterial nucleoid"/>
    <property type="evidence" value="ECO:0007669"/>
    <property type="project" value="TreeGrafter"/>
</dbReference>
<dbReference type="GO" id="GO:0006310">
    <property type="term" value="P:DNA recombination"/>
    <property type="evidence" value="ECO:0007669"/>
    <property type="project" value="UniProtKB-UniRule"/>
</dbReference>
<dbReference type="GO" id="GO:0006302">
    <property type="term" value="P:double-strand break repair"/>
    <property type="evidence" value="ECO:0007669"/>
    <property type="project" value="TreeGrafter"/>
</dbReference>
<dbReference type="FunFam" id="2.40.50.140:FF:000074">
    <property type="entry name" value="DNA repair protein RecO"/>
    <property type="match status" value="1"/>
</dbReference>
<dbReference type="Gene3D" id="2.40.50.140">
    <property type="entry name" value="Nucleic acid-binding proteins"/>
    <property type="match status" value="1"/>
</dbReference>
<dbReference type="Gene3D" id="1.20.1440.120">
    <property type="entry name" value="Recombination protein O, C-terminal domain"/>
    <property type="match status" value="1"/>
</dbReference>
<dbReference type="HAMAP" id="MF_00201">
    <property type="entry name" value="RecO"/>
    <property type="match status" value="1"/>
</dbReference>
<dbReference type="InterPro" id="IPR037278">
    <property type="entry name" value="ARFGAP/RecO"/>
</dbReference>
<dbReference type="InterPro" id="IPR022572">
    <property type="entry name" value="DNA_rep/recomb_RecO_N"/>
</dbReference>
<dbReference type="InterPro" id="IPR012340">
    <property type="entry name" value="NA-bd_OB-fold"/>
</dbReference>
<dbReference type="InterPro" id="IPR003717">
    <property type="entry name" value="RecO"/>
</dbReference>
<dbReference type="InterPro" id="IPR042242">
    <property type="entry name" value="RecO_C"/>
</dbReference>
<dbReference type="NCBIfam" id="TIGR00613">
    <property type="entry name" value="reco"/>
    <property type="match status" value="1"/>
</dbReference>
<dbReference type="PANTHER" id="PTHR33991">
    <property type="entry name" value="DNA REPAIR PROTEIN RECO"/>
    <property type="match status" value="1"/>
</dbReference>
<dbReference type="PANTHER" id="PTHR33991:SF1">
    <property type="entry name" value="DNA REPAIR PROTEIN RECO"/>
    <property type="match status" value="1"/>
</dbReference>
<dbReference type="Pfam" id="PF02565">
    <property type="entry name" value="RecO_C"/>
    <property type="match status" value="1"/>
</dbReference>
<dbReference type="Pfam" id="PF11967">
    <property type="entry name" value="RecO_N"/>
    <property type="match status" value="1"/>
</dbReference>
<dbReference type="SUPFAM" id="SSF57863">
    <property type="entry name" value="ArfGap/RecO-like zinc finger"/>
    <property type="match status" value="1"/>
</dbReference>
<dbReference type="SUPFAM" id="SSF50249">
    <property type="entry name" value="Nucleic acid-binding proteins"/>
    <property type="match status" value="1"/>
</dbReference>
<reference key="1">
    <citation type="journal article" date="2008" name="PLoS Genet.">
        <title>Complete genome sequence of the N2-fixing broad host range endophyte Klebsiella pneumoniae 342 and virulence predictions verified in mice.</title>
        <authorList>
            <person name="Fouts D.E."/>
            <person name="Tyler H.L."/>
            <person name="DeBoy R.T."/>
            <person name="Daugherty S."/>
            <person name="Ren Q."/>
            <person name="Badger J.H."/>
            <person name="Durkin A.S."/>
            <person name="Huot H."/>
            <person name="Shrivastava S."/>
            <person name="Kothari S."/>
            <person name="Dodson R.J."/>
            <person name="Mohamoud Y."/>
            <person name="Khouri H."/>
            <person name="Roesch L.F.W."/>
            <person name="Krogfelt K.A."/>
            <person name="Struve C."/>
            <person name="Triplett E.W."/>
            <person name="Methe B.A."/>
        </authorList>
    </citation>
    <scope>NUCLEOTIDE SEQUENCE [LARGE SCALE GENOMIC DNA]</scope>
    <source>
        <strain>342</strain>
    </source>
</reference>
<accession>B5XNH2</accession>
<protein>
    <recommendedName>
        <fullName evidence="1">DNA repair protein RecO</fullName>
    </recommendedName>
    <alternativeName>
        <fullName evidence="1">Recombination protein O</fullName>
    </alternativeName>
</protein>
<feature type="chain" id="PRO_1000099385" description="DNA repair protein RecO">
    <location>
        <begin position="1"/>
        <end position="245"/>
    </location>
</feature>
<keyword id="KW-0227">DNA damage</keyword>
<keyword id="KW-0233">DNA recombination</keyword>
<keyword id="KW-0234">DNA repair</keyword>